<sequence length="115" mass="12880">MSNSQVIEKLLAKAKRTDLPSFAPGDTVRVHVKIKEGDKERLQAFEGVVIGKSNGLQPSFTVRKISFGQGVERIFPTNSKVIDKIEVLRSAKVRRAKLYYLRALRGKAARLKEAE</sequence>
<proteinExistence type="inferred from homology"/>
<keyword id="KW-1185">Reference proteome</keyword>
<keyword id="KW-0687">Ribonucleoprotein</keyword>
<keyword id="KW-0689">Ribosomal protein</keyword>
<comment type="function">
    <text evidence="1">This protein is located at the 30S-50S ribosomal subunit interface and may play a role in the structure and function of the aminoacyl-tRNA binding site.</text>
</comment>
<comment type="similarity">
    <text evidence="1">Belongs to the bacterial ribosomal protein bL19 family.</text>
</comment>
<protein>
    <recommendedName>
        <fullName evidence="1">Large ribosomal subunit protein bL19</fullName>
    </recommendedName>
    <alternativeName>
        <fullName evidence="2">50S ribosomal protein L19</fullName>
    </alternativeName>
</protein>
<accession>Q1IMM3</accession>
<name>RL19_KORVE</name>
<gene>
    <name evidence="1" type="primary">rplS</name>
    <name type="ordered locus">Acid345_2876</name>
</gene>
<organism>
    <name type="scientific">Koribacter versatilis (strain Ellin345)</name>
    <dbReference type="NCBI Taxonomy" id="204669"/>
    <lineage>
        <taxon>Bacteria</taxon>
        <taxon>Pseudomonadati</taxon>
        <taxon>Acidobacteriota</taxon>
        <taxon>Terriglobia</taxon>
        <taxon>Terriglobales</taxon>
        <taxon>Candidatus Korobacteraceae</taxon>
        <taxon>Candidatus Korobacter</taxon>
    </lineage>
</organism>
<reference key="1">
    <citation type="journal article" date="2009" name="Appl. Environ. Microbiol.">
        <title>Three genomes from the phylum Acidobacteria provide insight into the lifestyles of these microorganisms in soils.</title>
        <authorList>
            <person name="Ward N.L."/>
            <person name="Challacombe J.F."/>
            <person name="Janssen P.H."/>
            <person name="Henrissat B."/>
            <person name="Coutinho P.M."/>
            <person name="Wu M."/>
            <person name="Xie G."/>
            <person name="Haft D.H."/>
            <person name="Sait M."/>
            <person name="Badger J."/>
            <person name="Barabote R.D."/>
            <person name="Bradley B."/>
            <person name="Brettin T.S."/>
            <person name="Brinkac L.M."/>
            <person name="Bruce D."/>
            <person name="Creasy T."/>
            <person name="Daugherty S.C."/>
            <person name="Davidsen T.M."/>
            <person name="DeBoy R.T."/>
            <person name="Detter J.C."/>
            <person name="Dodson R.J."/>
            <person name="Durkin A.S."/>
            <person name="Ganapathy A."/>
            <person name="Gwinn-Giglio M."/>
            <person name="Han C.S."/>
            <person name="Khouri H."/>
            <person name="Kiss H."/>
            <person name="Kothari S.P."/>
            <person name="Madupu R."/>
            <person name="Nelson K.E."/>
            <person name="Nelson W.C."/>
            <person name="Paulsen I."/>
            <person name="Penn K."/>
            <person name="Ren Q."/>
            <person name="Rosovitz M.J."/>
            <person name="Selengut J.D."/>
            <person name="Shrivastava S."/>
            <person name="Sullivan S.A."/>
            <person name="Tapia R."/>
            <person name="Thompson L.S."/>
            <person name="Watkins K.L."/>
            <person name="Yang Q."/>
            <person name="Yu C."/>
            <person name="Zafar N."/>
            <person name="Zhou L."/>
            <person name="Kuske C.R."/>
        </authorList>
    </citation>
    <scope>NUCLEOTIDE SEQUENCE [LARGE SCALE GENOMIC DNA]</scope>
    <source>
        <strain>Ellin345</strain>
    </source>
</reference>
<feature type="chain" id="PRO_0000252492" description="Large ribosomal subunit protein bL19">
    <location>
        <begin position="1"/>
        <end position="115"/>
    </location>
</feature>
<evidence type="ECO:0000255" key="1">
    <source>
        <dbReference type="HAMAP-Rule" id="MF_00402"/>
    </source>
</evidence>
<evidence type="ECO:0000305" key="2"/>
<dbReference type="EMBL" id="CP000360">
    <property type="protein sequence ID" value="ABF41877.1"/>
    <property type="molecule type" value="Genomic_DNA"/>
</dbReference>
<dbReference type="RefSeq" id="WP_011523678.1">
    <property type="nucleotide sequence ID" value="NC_008009.1"/>
</dbReference>
<dbReference type="SMR" id="Q1IMM3"/>
<dbReference type="STRING" id="204669.Acid345_2876"/>
<dbReference type="EnsemblBacteria" id="ABF41877">
    <property type="protein sequence ID" value="ABF41877"/>
    <property type="gene ID" value="Acid345_2876"/>
</dbReference>
<dbReference type="KEGG" id="aba:Acid345_2876"/>
<dbReference type="eggNOG" id="COG0335">
    <property type="taxonomic scope" value="Bacteria"/>
</dbReference>
<dbReference type="HOGENOM" id="CLU_103507_2_2_0"/>
<dbReference type="OrthoDB" id="9803541at2"/>
<dbReference type="Proteomes" id="UP000002432">
    <property type="component" value="Chromosome"/>
</dbReference>
<dbReference type="GO" id="GO:0022625">
    <property type="term" value="C:cytosolic large ribosomal subunit"/>
    <property type="evidence" value="ECO:0007669"/>
    <property type="project" value="TreeGrafter"/>
</dbReference>
<dbReference type="GO" id="GO:0003735">
    <property type="term" value="F:structural constituent of ribosome"/>
    <property type="evidence" value="ECO:0007669"/>
    <property type="project" value="InterPro"/>
</dbReference>
<dbReference type="GO" id="GO:0006412">
    <property type="term" value="P:translation"/>
    <property type="evidence" value="ECO:0007669"/>
    <property type="project" value="UniProtKB-UniRule"/>
</dbReference>
<dbReference type="FunFam" id="2.30.30.790:FF:000001">
    <property type="entry name" value="50S ribosomal protein L19"/>
    <property type="match status" value="1"/>
</dbReference>
<dbReference type="Gene3D" id="2.30.30.790">
    <property type="match status" value="1"/>
</dbReference>
<dbReference type="HAMAP" id="MF_00402">
    <property type="entry name" value="Ribosomal_bL19"/>
    <property type="match status" value="1"/>
</dbReference>
<dbReference type="InterPro" id="IPR001857">
    <property type="entry name" value="Ribosomal_bL19"/>
</dbReference>
<dbReference type="InterPro" id="IPR018257">
    <property type="entry name" value="Ribosomal_bL19_CS"/>
</dbReference>
<dbReference type="InterPro" id="IPR038657">
    <property type="entry name" value="Ribosomal_bL19_sf"/>
</dbReference>
<dbReference type="InterPro" id="IPR008991">
    <property type="entry name" value="Translation_prot_SH3-like_sf"/>
</dbReference>
<dbReference type="NCBIfam" id="TIGR01024">
    <property type="entry name" value="rplS_bact"/>
    <property type="match status" value="1"/>
</dbReference>
<dbReference type="PANTHER" id="PTHR15680:SF9">
    <property type="entry name" value="LARGE RIBOSOMAL SUBUNIT PROTEIN BL19M"/>
    <property type="match status" value="1"/>
</dbReference>
<dbReference type="PANTHER" id="PTHR15680">
    <property type="entry name" value="RIBOSOMAL PROTEIN L19"/>
    <property type="match status" value="1"/>
</dbReference>
<dbReference type="Pfam" id="PF01245">
    <property type="entry name" value="Ribosomal_L19"/>
    <property type="match status" value="1"/>
</dbReference>
<dbReference type="PIRSF" id="PIRSF002191">
    <property type="entry name" value="Ribosomal_L19"/>
    <property type="match status" value="1"/>
</dbReference>
<dbReference type="PRINTS" id="PR00061">
    <property type="entry name" value="RIBOSOMALL19"/>
</dbReference>
<dbReference type="SUPFAM" id="SSF50104">
    <property type="entry name" value="Translation proteins SH3-like domain"/>
    <property type="match status" value="1"/>
</dbReference>
<dbReference type="PROSITE" id="PS01015">
    <property type="entry name" value="RIBOSOMAL_L19"/>
    <property type="match status" value="1"/>
</dbReference>